<comment type="function">
    <text evidence="1">Catalyzes the transfer of a dimethylallyl group onto the adenine at position 37 in tRNAs that read codons beginning with uridine, leading to the formation of N6-(dimethylallyl)adenosine (i(6)A).</text>
</comment>
<comment type="catalytic activity">
    <reaction evidence="1">
        <text>adenosine(37) in tRNA + dimethylallyl diphosphate = N(6)-dimethylallyladenosine(37) in tRNA + diphosphate</text>
        <dbReference type="Rhea" id="RHEA:26482"/>
        <dbReference type="Rhea" id="RHEA-COMP:10162"/>
        <dbReference type="Rhea" id="RHEA-COMP:10375"/>
        <dbReference type="ChEBI" id="CHEBI:33019"/>
        <dbReference type="ChEBI" id="CHEBI:57623"/>
        <dbReference type="ChEBI" id="CHEBI:74411"/>
        <dbReference type="ChEBI" id="CHEBI:74415"/>
        <dbReference type="EC" id="2.5.1.75"/>
    </reaction>
</comment>
<comment type="cofactor">
    <cofactor evidence="1">
        <name>Mg(2+)</name>
        <dbReference type="ChEBI" id="CHEBI:18420"/>
    </cofactor>
</comment>
<comment type="subunit">
    <text evidence="1">Monomer.</text>
</comment>
<comment type="similarity">
    <text evidence="1">Belongs to the IPP transferase family.</text>
</comment>
<accession>Q48TZ1</accession>
<protein>
    <recommendedName>
        <fullName evidence="1">tRNA dimethylallyltransferase</fullName>
        <ecNumber evidence="1">2.5.1.75</ecNumber>
    </recommendedName>
    <alternativeName>
        <fullName evidence="1">Dimethylallyl diphosphate:tRNA dimethylallyltransferase</fullName>
        <shortName evidence="1">DMAPP:tRNA dimethylallyltransferase</shortName>
        <shortName evidence="1">DMATase</shortName>
    </alternativeName>
    <alternativeName>
        <fullName evidence="1">Isopentenyl-diphosphate:tRNA isopentenyltransferase</fullName>
        <shortName evidence="1">IPP transferase</shortName>
        <shortName evidence="1">IPPT</shortName>
        <shortName evidence="1">IPTase</shortName>
    </alternativeName>
</protein>
<evidence type="ECO:0000255" key="1">
    <source>
        <dbReference type="HAMAP-Rule" id="MF_00185"/>
    </source>
</evidence>
<organism>
    <name type="scientific">Streptococcus pyogenes serotype M28 (strain MGAS6180)</name>
    <dbReference type="NCBI Taxonomy" id="319701"/>
    <lineage>
        <taxon>Bacteria</taxon>
        <taxon>Bacillati</taxon>
        <taxon>Bacillota</taxon>
        <taxon>Bacilli</taxon>
        <taxon>Lactobacillales</taxon>
        <taxon>Streptococcaceae</taxon>
        <taxon>Streptococcus</taxon>
    </lineage>
</organism>
<reference key="1">
    <citation type="journal article" date="2005" name="J. Infect. Dis.">
        <title>Genome sequence of a serotype M28 strain of group A Streptococcus: potential new insights into puerperal sepsis and bacterial disease specificity.</title>
        <authorList>
            <person name="Green N.M."/>
            <person name="Zhang S."/>
            <person name="Porcella S.F."/>
            <person name="Nagiec M.J."/>
            <person name="Barbian K.D."/>
            <person name="Beres S.B."/>
            <person name="Lefebvre R.B."/>
            <person name="Musser J.M."/>
        </authorList>
    </citation>
    <scope>NUCLEOTIDE SEQUENCE [LARGE SCALE GENOMIC DNA]</scope>
    <source>
        <strain>MGAS6180</strain>
    </source>
</reference>
<dbReference type="EC" id="2.5.1.75" evidence="1"/>
<dbReference type="EMBL" id="CP000056">
    <property type="protein sequence ID" value="AAX71815.1"/>
    <property type="molecule type" value="Genomic_DNA"/>
</dbReference>
<dbReference type="RefSeq" id="WP_011284721.1">
    <property type="nucleotide sequence ID" value="NC_007296.2"/>
</dbReference>
<dbReference type="SMR" id="Q48TZ1"/>
<dbReference type="KEGG" id="spb:M28_Spy0702"/>
<dbReference type="HOGENOM" id="CLU_032616_0_1_9"/>
<dbReference type="GO" id="GO:0005524">
    <property type="term" value="F:ATP binding"/>
    <property type="evidence" value="ECO:0007669"/>
    <property type="project" value="UniProtKB-UniRule"/>
</dbReference>
<dbReference type="GO" id="GO:0052381">
    <property type="term" value="F:tRNA dimethylallyltransferase activity"/>
    <property type="evidence" value="ECO:0007669"/>
    <property type="project" value="UniProtKB-UniRule"/>
</dbReference>
<dbReference type="GO" id="GO:0006400">
    <property type="term" value="P:tRNA modification"/>
    <property type="evidence" value="ECO:0007669"/>
    <property type="project" value="TreeGrafter"/>
</dbReference>
<dbReference type="Gene3D" id="3.40.50.300">
    <property type="entry name" value="P-loop containing nucleotide triphosphate hydrolases"/>
    <property type="match status" value="1"/>
</dbReference>
<dbReference type="HAMAP" id="MF_00185">
    <property type="entry name" value="IPP_trans"/>
    <property type="match status" value="1"/>
</dbReference>
<dbReference type="InterPro" id="IPR039657">
    <property type="entry name" value="Dimethylallyltransferase"/>
</dbReference>
<dbReference type="InterPro" id="IPR018022">
    <property type="entry name" value="IPT"/>
</dbReference>
<dbReference type="InterPro" id="IPR027417">
    <property type="entry name" value="P-loop_NTPase"/>
</dbReference>
<dbReference type="NCBIfam" id="TIGR00174">
    <property type="entry name" value="miaA"/>
    <property type="match status" value="1"/>
</dbReference>
<dbReference type="PANTHER" id="PTHR11088">
    <property type="entry name" value="TRNA DIMETHYLALLYLTRANSFERASE"/>
    <property type="match status" value="1"/>
</dbReference>
<dbReference type="PANTHER" id="PTHR11088:SF60">
    <property type="entry name" value="TRNA DIMETHYLALLYLTRANSFERASE"/>
    <property type="match status" value="1"/>
</dbReference>
<dbReference type="Pfam" id="PF01715">
    <property type="entry name" value="IPPT"/>
    <property type="match status" value="1"/>
</dbReference>
<dbReference type="SUPFAM" id="SSF52540">
    <property type="entry name" value="P-loop containing nucleoside triphosphate hydrolases"/>
    <property type="match status" value="1"/>
</dbReference>
<proteinExistence type="inferred from homology"/>
<name>MIAA_STRPM</name>
<gene>
    <name evidence="1" type="primary">miaA</name>
    <name type="ordered locus">M28_Spy0702</name>
</gene>
<sequence>MTKIKIVVIVGPTAVGKTALGISLAKAFNGEIISGDSQQVYRQLDIGTAKATQEEQEAAVHHLTDIREVTESYSAYDFVQDAQKAISDIVSRGKLPIIVGGTGLYLQSLLEGYHLGGQVDQEAVKAYRNELEQLDDHDLYERLQVNNITIEQVNRRRAIRALELAQFADELENAETAYEPLIIGLNDDRQVIYDRINQRVDRMLENGLLEEAKWLYEHYPTVQASRGIGYKELFPYFVGEMTLAEASDQLKQNTRRFAKRQLTWFRNRMAVSFTAITAPDYPQVVHDRVRDFLGQKEKS</sequence>
<feature type="chain" id="PRO_1000020673" description="tRNA dimethylallyltransferase">
    <location>
        <begin position="1"/>
        <end position="299"/>
    </location>
</feature>
<feature type="region of interest" description="Interaction with substrate tRNA" evidence="1">
    <location>
        <begin position="36"/>
        <end position="39"/>
    </location>
</feature>
<feature type="binding site" evidence="1">
    <location>
        <begin position="11"/>
        <end position="18"/>
    </location>
    <ligand>
        <name>ATP</name>
        <dbReference type="ChEBI" id="CHEBI:30616"/>
    </ligand>
</feature>
<feature type="binding site" evidence="1">
    <location>
        <begin position="13"/>
        <end position="18"/>
    </location>
    <ligand>
        <name>substrate</name>
    </ligand>
</feature>
<feature type="site" description="Interaction with substrate tRNA" evidence="1">
    <location>
        <position position="102"/>
    </location>
</feature>
<feature type="site" description="Interaction with substrate tRNA" evidence="1">
    <location>
        <position position="128"/>
    </location>
</feature>
<keyword id="KW-0067">ATP-binding</keyword>
<keyword id="KW-0460">Magnesium</keyword>
<keyword id="KW-0547">Nucleotide-binding</keyword>
<keyword id="KW-0808">Transferase</keyword>
<keyword id="KW-0819">tRNA processing</keyword>